<feature type="chain" id="PRO_0000151091" description="Undecaprenyl-diphosphatase 1">
    <location>
        <begin position="1"/>
        <end position="270"/>
    </location>
</feature>
<feature type="transmembrane region" description="Helical" evidence="1">
    <location>
        <begin position="5"/>
        <end position="25"/>
    </location>
</feature>
<feature type="transmembrane region" description="Helical" evidence="1">
    <location>
        <begin position="42"/>
        <end position="62"/>
    </location>
</feature>
<feature type="transmembrane region" description="Helical" evidence="1">
    <location>
        <begin position="89"/>
        <end position="109"/>
    </location>
</feature>
<feature type="transmembrane region" description="Helical" evidence="1">
    <location>
        <begin position="117"/>
        <end position="137"/>
    </location>
</feature>
<feature type="transmembrane region" description="Helical" evidence="1">
    <location>
        <begin position="192"/>
        <end position="212"/>
    </location>
</feature>
<feature type="transmembrane region" description="Helical" evidence="1">
    <location>
        <begin position="220"/>
        <end position="240"/>
    </location>
</feature>
<feature type="transmembrane region" description="Helical" evidence="1">
    <location>
        <begin position="250"/>
        <end position="270"/>
    </location>
</feature>
<name>UPPP1_BACCR</name>
<comment type="function">
    <text evidence="1">Catalyzes the dephosphorylation of undecaprenyl diphosphate (UPP). Confers resistance to bacitracin.</text>
</comment>
<comment type="catalytic activity">
    <reaction evidence="1">
        <text>di-trans,octa-cis-undecaprenyl diphosphate + H2O = di-trans,octa-cis-undecaprenyl phosphate + phosphate + H(+)</text>
        <dbReference type="Rhea" id="RHEA:28094"/>
        <dbReference type="ChEBI" id="CHEBI:15377"/>
        <dbReference type="ChEBI" id="CHEBI:15378"/>
        <dbReference type="ChEBI" id="CHEBI:43474"/>
        <dbReference type="ChEBI" id="CHEBI:58405"/>
        <dbReference type="ChEBI" id="CHEBI:60392"/>
        <dbReference type="EC" id="3.6.1.27"/>
    </reaction>
</comment>
<comment type="subcellular location">
    <subcellularLocation>
        <location evidence="1">Cell membrane</location>
        <topology evidence="1">Multi-pass membrane protein</topology>
    </subcellularLocation>
</comment>
<comment type="miscellaneous">
    <text>Bacitracin is thought to be involved in the inhibition of peptidoglycan synthesis by sequestering undecaprenyl diphosphate, thereby reducing the pool of lipid carrier available.</text>
</comment>
<comment type="similarity">
    <text evidence="1">Belongs to the UppP family.</text>
</comment>
<gene>
    <name evidence="1" type="primary">uppP1</name>
    <name type="synonym">bacA1</name>
    <name type="synonym">upk1</name>
    <name type="ordered locus">BC_0677</name>
</gene>
<sequence length="270" mass="29934">MEQFYYVLKYLILGLFQGLTEPIPISSSGHLVLAQHLLGLKIEGFSFELLVNSASLLAVLLIYRNDLIRLTKNGLSYIFTRAEDAKSDFFFIIYLVIATIPAGVIGVLFKDYIDQYLKGVKMVGISLLITAVGLWIIRNLRGRKNDGDLSMKDAIIVGLAQACALIPGISRSGATIVAAMLLGMKQETALRFSFLLYIPVSLGGLLLSITDIANDPNLDTLFVPYVVAFIATFIMTYISLKWFMNIMAKGNLKYFSFYCIIVGVLTLIFL</sequence>
<organism>
    <name type="scientific">Bacillus cereus (strain ATCC 14579 / DSM 31 / CCUG 7414 / JCM 2152 / NBRC 15305 / NCIMB 9373 / NCTC 2599 / NRRL B-3711)</name>
    <dbReference type="NCBI Taxonomy" id="226900"/>
    <lineage>
        <taxon>Bacteria</taxon>
        <taxon>Bacillati</taxon>
        <taxon>Bacillota</taxon>
        <taxon>Bacilli</taxon>
        <taxon>Bacillales</taxon>
        <taxon>Bacillaceae</taxon>
        <taxon>Bacillus</taxon>
        <taxon>Bacillus cereus group</taxon>
    </lineage>
</organism>
<dbReference type="EC" id="3.6.1.27" evidence="1"/>
<dbReference type="EMBL" id="AE016877">
    <property type="protein sequence ID" value="AAP07691.1"/>
    <property type="molecule type" value="Genomic_DNA"/>
</dbReference>
<dbReference type="RefSeq" id="NP_830490.1">
    <property type="nucleotide sequence ID" value="NC_004722.1"/>
</dbReference>
<dbReference type="RefSeq" id="WP_000434794.1">
    <property type="nucleotide sequence ID" value="NZ_CP138336.1"/>
</dbReference>
<dbReference type="SMR" id="Q81HV4"/>
<dbReference type="STRING" id="226900.BC_0677"/>
<dbReference type="KEGG" id="bce:BC0677"/>
<dbReference type="PATRIC" id="fig|226900.8.peg.637"/>
<dbReference type="HOGENOM" id="CLU_060296_1_2_9"/>
<dbReference type="OrthoDB" id="9808289at2"/>
<dbReference type="Proteomes" id="UP000001417">
    <property type="component" value="Chromosome"/>
</dbReference>
<dbReference type="GO" id="GO:0005886">
    <property type="term" value="C:plasma membrane"/>
    <property type="evidence" value="ECO:0000318"/>
    <property type="project" value="GO_Central"/>
</dbReference>
<dbReference type="GO" id="GO:0050380">
    <property type="term" value="F:undecaprenyl-diphosphatase activity"/>
    <property type="evidence" value="ECO:0000318"/>
    <property type="project" value="GO_Central"/>
</dbReference>
<dbReference type="GO" id="GO:0071555">
    <property type="term" value="P:cell wall organization"/>
    <property type="evidence" value="ECO:0007669"/>
    <property type="project" value="UniProtKB-KW"/>
</dbReference>
<dbReference type="GO" id="GO:0009252">
    <property type="term" value="P:peptidoglycan biosynthetic process"/>
    <property type="evidence" value="ECO:0007669"/>
    <property type="project" value="UniProtKB-KW"/>
</dbReference>
<dbReference type="GO" id="GO:0000270">
    <property type="term" value="P:peptidoglycan metabolic process"/>
    <property type="evidence" value="ECO:0000318"/>
    <property type="project" value="GO_Central"/>
</dbReference>
<dbReference type="GO" id="GO:0008360">
    <property type="term" value="P:regulation of cell shape"/>
    <property type="evidence" value="ECO:0007669"/>
    <property type="project" value="UniProtKB-KW"/>
</dbReference>
<dbReference type="GO" id="GO:0046677">
    <property type="term" value="P:response to antibiotic"/>
    <property type="evidence" value="ECO:0007669"/>
    <property type="project" value="UniProtKB-UniRule"/>
</dbReference>
<dbReference type="HAMAP" id="MF_01006">
    <property type="entry name" value="Undec_diphosphatase"/>
    <property type="match status" value="1"/>
</dbReference>
<dbReference type="InterPro" id="IPR003824">
    <property type="entry name" value="UppP"/>
</dbReference>
<dbReference type="PANTHER" id="PTHR30622">
    <property type="entry name" value="UNDECAPRENYL-DIPHOSPHATASE"/>
    <property type="match status" value="1"/>
</dbReference>
<dbReference type="PANTHER" id="PTHR30622:SF2">
    <property type="entry name" value="UNDECAPRENYL-DIPHOSPHATASE"/>
    <property type="match status" value="1"/>
</dbReference>
<dbReference type="Pfam" id="PF02673">
    <property type="entry name" value="BacA"/>
    <property type="match status" value="1"/>
</dbReference>
<keyword id="KW-0046">Antibiotic resistance</keyword>
<keyword id="KW-1003">Cell membrane</keyword>
<keyword id="KW-0133">Cell shape</keyword>
<keyword id="KW-0961">Cell wall biogenesis/degradation</keyword>
<keyword id="KW-0378">Hydrolase</keyword>
<keyword id="KW-0472">Membrane</keyword>
<keyword id="KW-0573">Peptidoglycan synthesis</keyword>
<keyword id="KW-1185">Reference proteome</keyword>
<keyword id="KW-0812">Transmembrane</keyword>
<keyword id="KW-1133">Transmembrane helix</keyword>
<reference key="1">
    <citation type="journal article" date="2003" name="Nature">
        <title>Genome sequence of Bacillus cereus and comparative analysis with Bacillus anthracis.</title>
        <authorList>
            <person name="Ivanova N."/>
            <person name="Sorokin A."/>
            <person name="Anderson I."/>
            <person name="Galleron N."/>
            <person name="Candelon B."/>
            <person name="Kapatral V."/>
            <person name="Bhattacharyya A."/>
            <person name="Reznik G."/>
            <person name="Mikhailova N."/>
            <person name="Lapidus A."/>
            <person name="Chu L."/>
            <person name="Mazur M."/>
            <person name="Goltsman E."/>
            <person name="Larsen N."/>
            <person name="D'Souza M."/>
            <person name="Walunas T."/>
            <person name="Grechkin Y."/>
            <person name="Pusch G."/>
            <person name="Haselkorn R."/>
            <person name="Fonstein M."/>
            <person name="Ehrlich S.D."/>
            <person name="Overbeek R."/>
            <person name="Kyrpides N.C."/>
        </authorList>
    </citation>
    <scope>NUCLEOTIDE SEQUENCE [LARGE SCALE GENOMIC DNA]</scope>
    <source>
        <strain>ATCC 14579 / DSM 31 / CCUG 7414 / JCM 2152 / NBRC 15305 / NCIMB 9373 / NCTC 2599 / NRRL B-3711</strain>
    </source>
</reference>
<evidence type="ECO:0000255" key="1">
    <source>
        <dbReference type="HAMAP-Rule" id="MF_01006"/>
    </source>
</evidence>
<proteinExistence type="inferred from homology"/>
<accession>Q81HV4</accession>
<protein>
    <recommendedName>
        <fullName evidence="1">Undecaprenyl-diphosphatase 1</fullName>
        <ecNumber evidence="1">3.6.1.27</ecNumber>
    </recommendedName>
    <alternativeName>
        <fullName evidence="1">Bacitracin resistance protein 1</fullName>
    </alternativeName>
    <alternativeName>
        <fullName evidence="1">Undecaprenyl pyrophosphate phosphatase 1</fullName>
    </alternativeName>
</protein>